<name>MDTP_ECOLI</name>
<feature type="signal peptide" evidence="1">
    <location>
        <begin position="1"/>
        <end position="23"/>
    </location>
</feature>
<feature type="chain" id="PRO_0000031009" description="Multidrug resistance outer membrane protein MdtP">
    <location>
        <begin position="24"/>
        <end position="488"/>
    </location>
</feature>
<feature type="lipid moiety-binding region" description="N-palmitoyl cysteine" evidence="1">
    <location>
        <position position="24"/>
    </location>
</feature>
<feature type="lipid moiety-binding region" description="S-diacylglycerol cysteine" evidence="1">
    <location>
        <position position="24"/>
    </location>
</feature>
<feature type="sequence conflict" description="In Ref. 1; AAC43174." evidence="3" ref="1">
    <original>G</original>
    <variation>A</variation>
    <location>
        <position position="170"/>
    </location>
</feature>
<comment type="function">
    <text evidence="2">Could be involved in resistance to puromycin, acriflavine and tetraphenylarsonium chloride.</text>
</comment>
<comment type="subunit">
    <text>Could be part of a tripartite efflux system composed of MdtN, MdtO and MdtP.</text>
</comment>
<comment type="subcellular location">
    <subcellularLocation>
        <location evidence="3">Cell outer membrane</location>
        <topology evidence="1">Lipid-anchor</topology>
    </subcellularLocation>
</comment>
<comment type="similarity">
    <text evidence="3">Belongs to the outer membrane factor (OMF) (TC 1.B.17) family.</text>
</comment>
<organism>
    <name type="scientific">Escherichia coli (strain K12)</name>
    <dbReference type="NCBI Taxonomy" id="83333"/>
    <lineage>
        <taxon>Bacteria</taxon>
        <taxon>Pseudomonadati</taxon>
        <taxon>Pseudomonadota</taxon>
        <taxon>Gammaproteobacteria</taxon>
        <taxon>Enterobacterales</taxon>
        <taxon>Enterobacteriaceae</taxon>
        <taxon>Escherichia</taxon>
    </lineage>
</organism>
<sequence>MINRQLSRLLLCSILGSTTLISGCALVRKDSAPHQQLKPEQIKLADDIHLASSGWPQAQWWKQLNDPQLDALIQRTLSGSHTLAEAKLREEKAQSQADLLDAGSQLQVAALGMLNRQRVSANGFLSPYSMDAPALGMDGPYYTEATVGLFAGLDLDLWGVHRSAVAAAIGAHNAALAETAAVELSLATGVAQLYYSMQASYQMLDLLEQTHDVIDYAVKAHQSKVAHGLEAQVPFHGARAQILAVDKQIVAVKGQITETRESLRALIGAGASDMPEIRPVALPQVQTGIPATLSYELLARRPDLQAMRWYVQASLDQVDSARALFYPSFDIKAFFGLDSIHLHTLFKKTSRQFNFIPGLKLPLFDGGRLNANLEGTRAASNMMIERYNQSVLNAVRDVAVNGTRLQTLNDEREMQAERVEATRFTQRAAEAAYQRGLTSRLQATEARLPVLAEEMSLLMLDSRRVIQSIQLMKSLGGGYQAGPVVEKK</sequence>
<protein>
    <recommendedName>
        <fullName>Multidrug resistance outer membrane protein MdtP</fullName>
    </recommendedName>
</protein>
<gene>
    <name type="primary">mdtP</name>
    <name type="synonym">yjcP</name>
    <name type="ordered locus">b4080</name>
    <name type="ordered locus">JW4041</name>
</gene>
<keyword id="KW-0046">Antibiotic resistance</keyword>
<keyword id="KW-0998">Cell outer membrane</keyword>
<keyword id="KW-0449">Lipoprotein</keyword>
<keyword id="KW-0472">Membrane</keyword>
<keyword id="KW-0564">Palmitate</keyword>
<keyword id="KW-1185">Reference proteome</keyword>
<keyword id="KW-0732">Signal</keyword>
<keyword id="KW-0812">Transmembrane</keyword>
<keyword id="KW-1134">Transmembrane beta strand</keyword>
<reference key="1">
    <citation type="journal article" date="1993" name="Nucleic Acids Res.">
        <title>Analysis of the Escherichia coli genome. IV. DNA sequence of the region from 89.2 to 92.8 minutes.</title>
        <authorList>
            <person name="Blattner F.R."/>
            <person name="Burland V.D."/>
            <person name="Plunkett G. III"/>
            <person name="Sofia H.J."/>
            <person name="Daniels D.L."/>
        </authorList>
    </citation>
    <scope>NUCLEOTIDE SEQUENCE [LARGE SCALE GENOMIC DNA]</scope>
    <source>
        <strain>K12 / MG1655 / ATCC 47076</strain>
    </source>
</reference>
<reference key="2">
    <citation type="journal article" date="1997" name="Science">
        <title>The complete genome sequence of Escherichia coli K-12.</title>
        <authorList>
            <person name="Blattner F.R."/>
            <person name="Plunkett G. III"/>
            <person name="Bloch C.A."/>
            <person name="Perna N.T."/>
            <person name="Burland V."/>
            <person name="Riley M."/>
            <person name="Collado-Vides J."/>
            <person name="Glasner J.D."/>
            <person name="Rode C.K."/>
            <person name="Mayhew G.F."/>
            <person name="Gregor J."/>
            <person name="Davis N.W."/>
            <person name="Kirkpatrick H.A."/>
            <person name="Goeden M.A."/>
            <person name="Rose D.J."/>
            <person name="Mau B."/>
            <person name="Shao Y."/>
        </authorList>
    </citation>
    <scope>NUCLEOTIDE SEQUENCE [LARGE SCALE GENOMIC DNA]</scope>
    <scope>SEQUENCE REVISION TO 170</scope>
    <source>
        <strain>K12 / MG1655 / ATCC 47076</strain>
    </source>
</reference>
<reference key="3">
    <citation type="journal article" date="2006" name="Mol. Syst. Biol.">
        <title>Highly accurate genome sequences of Escherichia coli K-12 strains MG1655 and W3110.</title>
        <authorList>
            <person name="Hayashi K."/>
            <person name="Morooka N."/>
            <person name="Yamamoto Y."/>
            <person name="Fujita K."/>
            <person name="Isono K."/>
            <person name="Choi S."/>
            <person name="Ohtsubo E."/>
            <person name="Baba T."/>
            <person name="Wanner B.L."/>
            <person name="Mori H."/>
            <person name="Horiuchi T."/>
        </authorList>
    </citation>
    <scope>NUCLEOTIDE SEQUENCE [LARGE SCALE GENOMIC DNA]</scope>
    <source>
        <strain>K12 / W3110 / ATCC 27325 / DSM 5911</strain>
    </source>
</reference>
<reference key="4">
    <citation type="journal article" date="2001" name="Antimicrob. Agents Chemother.">
        <title>Antibiotic susceptibility profiles of Escherichia coli strains lacking multidrug efflux pump genes.</title>
        <authorList>
            <person name="Sulavik M.C."/>
            <person name="Houseweart C."/>
            <person name="Cramer C."/>
            <person name="Jiwani N."/>
            <person name="Murgolo N."/>
            <person name="Greene J."/>
            <person name="DiDomenico B."/>
            <person name="Shaw K.J."/>
            <person name="Miller G.H."/>
            <person name="Hare R."/>
            <person name="Shimer G."/>
        </authorList>
    </citation>
    <scope>FUNCTION</scope>
</reference>
<evidence type="ECO:0000255" key="1">
    <source>
        <dbReference type="PROSITE-ProRule" id="PRU00303"/>
    </source>
</evidence>
<evidence type="ECO:0000269" key="2">
    <source>
    </source>
</evidence>
<evidence type="ECO:0000305" key="3"/>
<dbReference type="EMBL" id="U00006">
    <property type="protein sequence ID" value="AAC43174.1"/>
    <property type="molecule type" value="Genomic_DNA"/>
</dbReference>
<dbReference type="EMBL" id="U00096">
    <property type="protein sequence ID" value="AAD13463.1"/>
    <property type="molecule type" value="Genomic_DNA"/>
</dbReference>
<dbReference type="EMBL" id="AP009048">
    <property type="protein sequence ID" value="BAE78082.1"/>
    <property type="molecule type" value="Genomic_DNA"/>
</dbReference>
<dbReference type="PIR" id="G65216">
    <property type="entry name" value="G65216"/>
</dbReference>
<dbReference type="RefSeq" id="NP_418504.1">
    <property type="nucleotide sequence ID" value="NC_000913.3"/>
</dbReference>
<dbReference type="RefSeq" id="WP_000610601.1">
    <property type="nucleotide sequence ID" value="NZ_SSZK01000016.1"/>
</dbReference>
<dbReference type="SMR" id="P32714"/>
<dbReference type="BioGRID" id="4262951">
    <property type="interactions" value="164"/>
</dbReference>
<dbReference type="ComplexPortal" id="CPX-6021">
    <property type="entry name" value="SdsRQP multidrug transport complex"/>
</dbReference>
<dbReference type="FunCoup" id="P32714">
    <property type="interactions" value="156"/>
</dbReference>
<dbReference type="IntAct" id="P32714">
    <property type="interactions" value="3"/>
</dbReference>
<dbReference type="STRING" id="511145.b4080"/>
<dbReference type="CARD" id="ARO:3003550">
    <property type="molecule name" value="mdtP"/>
    <property type="mechanism identifier" value="ARO:0010000"/>
    <property type="mechanism name" value="antibiotic efflux"/>
</dbReference>
<dbReference type="TCDB" id="1.B.17.3.9">
    <property type="family name" value="the outer membrane factor (omf) family"/>
</dbReference>
<dbReference type="PaxDb" id="511145-b4080"/>
<dbReference type="EnsemblBacteria" id="AAD13463">
    <property type="protein sequence ID" value="AAD13463"/>
    <property type="gene ID" value="b4080"/>
</dbReference>
<dbReference type="GeneID" id="948583"/>
<dbReference type="KEGG" id="ecj:JW4041"/>
<dbReference type="KEGG" id="eco:b4080"/>
<dbReference type="KEGG" id="ecoc:C3026_22055"/>
<dbReference type="PATRIC" id="fig|1411691.4.peg.2621"/>
<dbReference type="EchoBASE" id="EB1895"/>
<dbReference type="eggNOG" id="COG1538">
    <property type="taxonomic scope" value="Bacteria"/>
</dbReference>
<dbReference type="HOGENOM" id="CLU_012817_6_3_6"/>
<dbReference type="InParanoid" id="P32714"/>
<dbReference type="OMA" id="TRALEHM"/>
<dbReference type="OrthoDB" id="9770517at2"/>
<dbReference type="PhylomeDB" id="P32714"/>
<dbReference type="BioCyc" id="EcoCyc:EG11952-MONOMER"/>
<dbReference type="BioCyc" id="MetaCyc:EG11952-MONOMER"/>
<dbReference type="PRO" id="PR:P32714"/>
<dbReference type="Proteomes" id="UP000000625">
    <property type="component" value="Chromosome"/>
</dbReference>
<dbReference type="GO" id="GO:0009279">
    <property type="term" value="C:cell outer membrane"/>
    <property type="evidence" value="ECO:0000247"/>
    <property type="project" value="EcoCyc"/>
</dbReference>
<dbReference type="GO" id="GO:0016020">
    <property type="term" value="C:membrane"/>
    <property type="evidence" value="ECO:0000318"/>
    <property type="project" value="GO_Central"/>
</dbReference>
<dbReference type="GO" id="GO:1990351">
    <property type="term" value="C:transporter complex"/>
    <property type="evidence" value="ECO:0000303"/>
    <property type="project" value="ComplexPortal"/>
</dbReference>
<dbReference type="GO" id="GO:0015562">
    <property type="term" value="F:efflux transmembrane transporter activity"/>
    <property type="evidence" value="ECO:0007669"/>
    <property type="project" value="InterPro"/>
</dbReference>
<dbReference type="GO" id="GO:0022857">
    <property type="term" value="F:transmembrane transporter activity"/>
    <property type="evidence" value="ECO:0000318"/>
    <property type="project" value="GO_Central"/>
</dbReference>
<dbReference type="GO" id="GO:0046677">
    <property type="term" value="P:response to antibiotic"/>
    <property type="evidence" value="ECO:0000315"/>
    <property type="project" value="EcoCyc"/>
</dbReference>
<dbReference type="GO" id="GO:0055085">
    <property type="term" value="P:transmembrane transport"/>
    <property type="evidence" value="ECO:0000318"/>
    <property type="project" value="GO_Central"/>
</dbReference>
<dbReference type="Gene3D" id="1.20.1600.10">
    <property type="entry name" value="Outer membrane efflux proteins (OEP)"/>
    <property type="match status" value="1"/>
</dbReference>
<dbReference type="Gene3D" id="2.20.200.10">
    <property type="entry name" value="Outer membrane efflux proteins (OEP)"/>
    <property type="match status" value="1"/>
</dbReference>
<dbReference type="InterPro" id="IPR050737">
    <property type="entry name" value="OMF"/>
</dbReference>
<dbReference type="InterPro" id="IPR003423">
    <property type="entry name" value="OMP_efflux"/>
</dbReference>
<dbReference type="InterPro" id="IPR010131">
    <property type="entry name" value="RND_efflux_OM_lipoprot_NodT"/>
</dbReference>
<dbReference type="NCBIfam" id="TIGR01845">
    <property type="entry name" value="outer_NodT"/>
    <property type="match status" value="1"/>
</dbReference>
<dbReference type="NCBIfam" id="NF007390">
    <property type="entry name" value="PRK09915.1"/>
    <property type="match status" value="1"/>
</dbReference>
<dbReference type="PANTHER" id="PTHR30203:SF20">
    <property type="entry name" value="MULTIDRUG RESISTANCE OUTER MEMBRANE PROTEIN MDTP-RELATED"/>
    <property type="match status" value="1"/>
</dbReference>
<dbReference type="PANTHER" id="PTHR30203">
    <property type="entry name" value="OUTER MEMBRANE CATION EFFLUX PROTEIN"/>
    <property type="match status" value="1"/>
</dbReference>
<dbReference type="Pfam" id="PF02321">
    <property type="entry name" value="OEP"/>
    <property type="match status" value="2"/>
</dbReference>
<dbReference type="SUPFAM" id="SSF56954">
    <property type="entry name" value="Outer membrane efflux proteins (OEP)"/>
    <property type="match status" value="1"/>
</dbReference>
<dbReference type="PROSITE" id="PS51257">
    <property type="entry name" value="PROKAR_LIPOPROTEIN"/>
    <property type="match status" value="1"/>
</dbReference>
<proteinExistence type="inferred from homology"/>
<accession>P32714</accession>
<accession>Q2M6M4</accession>